<proteinExistence type="evidence at protein level"/>
<name>TDRD1_HUMAN</name>
<reference key="1">
    <citation type="journal article" date="2004" name="Nat. Genet.">
        <title>Complete sequencing and characterization of 21,243 full-length human cDNAs.</title>
        <authorList>
            <person name="Ota T."/>
            <person name="Suzuki Y."/>
            <person name="Nishikawa T."/>
            <person name="Otsuki T."/>
            <person name="Sugiyama T."/>
            <person name="Irie R."/>
            <person name="Wakamatsu A."/>
            <person name="Hayashi K."/>
            <person name="Sato H."/>
            <person name="Nagai K."/>
            <person name="Kimura K."/>
            <person name="Makita H."/>
            <person name="Sekine M."/>
            <person name="Obayashi M."/>
            <person name="Nishi T."/>
            <person name="Shibahara T."/>
            <person name="Tanaka T."/>
            <person name="Ishii S."/>
            <person name="Yamamoto J."/>
            <person name="Saito K."/>
            <person name="Kawai Y."/>
            <person name="Isono Y."/>
            <person name="Nakamura Y."/>
            <person name="Nagahari K."/>
            <person name="Murakami K."/>
            <person name="Yasuda T."/>
            <person name="Iwayanagi T."/>
            <person name="Wagatsuma M."/>
            <person name="Shiratori A."/>
            <person name="Sudo H."/>
            <person name="Hosoiri T."/>
            <person name="Kaku Y."/>
            <person name="Kodaira H."/>
            <person name="Kondo H."/>
            <person name="Sugawara M."/>
            <person name="Takahashi M."/>
            <person name="Kanda K."/>
            <person name="Yokoi T."/>
            <person name="Furuya T."/>
            <person name="Kikkawa E."/>
            <person name="Omura Y."/>
            <person name="Abe K."/>
            <person name="Kamihara K."/>
            <person name="Katsuta N."/>
            <person name="Sato K."/>
            <person name="Tanikawa M."/>
            <person name="Yamazaki M."/>
            <person name="Ninomiya K."/>
            <person name="Ishibashi T."/>
            <person name="Yamashita H."/>
            <person name="Murakawa K."/>
            <person name="Fujimori K."/>
            <person name="Tanai H."/>
            <person name="Kimata M."/>
            <person name="Watanabe M."/>
            <person name="Hiraoka S."/>
            <person name="Chiba Y."/>
            <person name="Ishida S."/>
            <person name="Ono Y."/>
            <person name="Takiguchi S."/>
            <person name="Watanabe S."/>
            <person name="Yosida M."/>
            <person name="Hotuta T."/>
            <person name="Kusano J."/>
            <person name="Kanehori K."/>
            <person name="Takahashi-Fujii A."/>
            <person name="Hara H."/>
            <person name="Tanase T.-O."/>
            <person name="Nomura Y."/>
            <person name="Togiya S."/>
            <person name="Komai F."/>
            <person name="Hara R."/>
            <person name="Takeuchi K."/>
            <person name="Arita M."/>
            <person name="Imose N."/>
            <person name="Musashino K."/>
            <person name="Yuuki H."/>
            <person name="Oshima A."/>
            <person name="Sasaki N."/>
            <person name="Aotsuka S."/>
            <person name="Yoshikawa Y."/>
            <person name="Matsunawa H."/>
            <person name="Ichihara T."/>
            <person name="Shiohata N."/>
            <person name="Sano S."/>
            <person name="Moriya S."/>
            <person name="Momiyama H."/>
            <person name="Satoh N."/>
            <person name="Takami S."/>
            <person name="Terashima Y."/>
            <person name="Suzuki O."/>
            <person name="Nakagawa S."/>
            <person name="Senoh A."/>
            <person name="Mizoguchi H."/>
            <person name="Goto Y."/>
            <person name="Shimizu F."/>
            <person name="Wakebe H."/>
            <person name="Hishigaki H."/>
            <person name="Watanabe T."/>
            <person name="Sugiyama A."/>
            <person name="Takemoto M."/>
            <person name="Kawakami B."/>
            <person name="Yamazaki M."/>
            <person name="Watanabe K."/>
            <person name="Kumagai A."/>
            <person name="Itakura S."/>
            <person name="Fukuzumi Y."/>
            <person name="Fujimori Y."/>
            <person name="Komiyama M."/>
            <person name="Tashiro H."/>
            <person name="Tanigami A."/>
            <person name="Fujiwara T."/>
            <person name="Ono T."/>
            <person name="Yamada K."/>
            <person name="Fujii Y."/>
            <person name="Ozaki K."/>
            <person name="Hirao M."/>
            <person name="Ohmori Y."/>
            <person name="Kawabata A."/>
            <person name="Hikiji T."/>
            <person name="Kobatake N."/>
            <person name="Inagaki H."/>
            <person name="Ikema Y."/>
            <person name="Okamoto S."/>
            <person name="Okitani R."/>
            <person name="Kawakami T."/>
            <person name="Noguchi S."/>
            <person name="Itoh T."/>
            <person name="Shigeta K."/>
            <person name="Senba T."/>
            <person name="Matsumura K."/>
            <person name="Nakajima Y."/>
            <person name="Mizuno T."/>
            <person name="Morinaga M."/>
            <person name="Sasaki M."/>
            <person name="Togashi T."/>
            <person name="Oyama M."/>
            <person name="Hata H."/>
            <person name="Watanabe M."/>
            <person name="Komatsu T."/>
            <person name="Mizushima-Sugano J."/>
            <person name="Satoh T."/>
            <person name="Shirai Y."/>
            <person name="Takahashi Y."/>
            <person name="Nakagawa K."/>
            <person name="Okumura K."/>
            <person name="Nagase T."/>
            <person name="Nomura N."/>
            <person name="Kikuchi H."/>
            <person name="Masuho Y."/>
            <person name="Yamashita R."/>
            <person name="Nakai K."/>
            <person name="Yada T."/>
            <person name="Nakamura Y."/>
            <person name="Ohara O."/>
            <person name="Isogai T."/>
            <person name="Sugano S."/>
        </authorList>
    </citation>
    <scope>NUCLEOTIDE SEQUENCE [LARGE SCALE MRNA] (ISOFORMS 3 AND 4)</scope>
    <scope>NUCLEOTIDE SEQUENCE [LARGE SCALE MRNA] OF 444-1177 (ISOFORM 1)</scope>
    <source>
        <tissue>Testis</tissue>
        <tissue>Trachea</tissue>
    </source>
</reference>
<reference key="2">
    <citation type="journal article" date="2004" name="Nature">
        <title>The DNA sequence and comparative analysis of human chromosome 10.</title>
        <authorList>
            <person name="Deloukas P."/>
            <person name="Earthrowl M.E."/>
            <person name="Grafham D.V."/>
            <person name="Rubenfield M."/>
            <person name="French L."/>
            <person name="Steward C.A."/>
            <person name="Sims S.K."/>
            <person name="Jones M.C."/>
            <person name="Searle S."/>
            <person name="Scott C."/>
            <person name="Howe K."/>
            <person name="Hunt S.E."/>
            <person name="Andrews T.D."/>
            <person name="Gilbert J.G.R."/>
            <person name="Swarbreck D."/>
            <person name="Ashurst J.L."/>
            <person name="Taylor A."/>
            <person name="Battles J."/>
            <person name="Bird C.P."/>
            <person name="Ainscough R."/>
            <person name="Almeida J.P."/>
            <person name="Ashwell R.I.S."/>
            <person name="Ambrose K.D."/>
            <person name="Babbage A.K."/>
            <person name="Bagguley C.L."/>
            <person name="Bailey J."/>
            <person name="Banerjee R."/>
            <person name="Bates K."/>
            <person name="Beasley H."/>
            <person name="Bray-Allen S."/>
            <person name="Brown A.J."/>
            <person name="Brown J.Y."/>
            <person name="Burford D.C."/>
            <person name="Burrill W."/>
            <person name="Burton J."/>
            <person name="Cahill P."/>
            <person name="Camire D."/>
            <person name="Carter N.P."/>
            <person name="Chapman J.C."/>
            <person name="Clark S.Y."/>
            <person name="Clarke G."/>
            <person name="Clee C.M."/>
            <person name="Clegg S."/>
            <person name="Corby N."/>
            <person name="Coulson A."/>
            <person name="Dhami P."/>
            <person name="Dutta I."/>
            <person name="Dunn M."/>
            <person name="Faulkner L."/>
            <person name="Frankish A."/>
            <person name="Frankland J.A."/>
            <person name="Garner P."/>
            <person name="Garnett J."/>
            <person name="Gribble S."/>
            <person name="Griffiths C."/>
            <person name="Grocock R."/>
            <person name="Gustafson E."/>
            <person name="Hammond S."/>
            <person name="Harley J.L."/>
            <person name="Hart E."/>
            <person name="Heath P.D."/>
            <person name="Ho T.P."/>
            <person name="Hopkins B."/>
            <person name="Horne J."/>
            <person name="Howden P.J."/>
            <person name="Huckle E."/>
            <person name="Hynds C."/>
            <person name="Johnson C."/>
            <person name="Johnson D."/>
            <person name="Kana A."/>
            <person name="Kay M."/>
            <person name="Kimberley A.M."/>
            <person name="Kershaw J.K."/>
            <person name="Kokkinaki M."/>
            <person name="Laird G.K."/>
            <person name="Lawlor S."/>
            <person name="Lee H.M."/>
            <person name="Leongamornlert D.A."/>
            <person name="Laird G."/>
            <person name="Lloyd C."/>
            <person name="Lloyd D.M."/>
            <person name="Loveland J."/>
            <person name="Lovell J."/>
            <person name="McLaren S."/>
            <person name="McLay K.E."/>
            <person name="McMurray A."/>
            <person name="Mashreghi-Mohammadi M."/>
            <person name="Matthews L."/>
            <person name="Milne S."/>
            <person name="Nickerson T."/>
            <person name="Nguyen M."/>
            <person name="Overton-Larty E."/>
            <person name="Palmer S.A."/>
            <person name="Pearce A.V."/>
            <person name="Peck A.I."/>
            <person name="Pelan S."/>
            <person name="Phillimore B."/>
            <person name="Porter K."/>
            <person name="Rice C.M."/>
            <person name="Rogosin A."/>
            <person name="Ross M.T."/>
            <person name="Sarafidou T."/>
            <person name="Sehra H.K."/>
            <person name="Shownkeen R."/>
            <person name="Skuce C.D."/>
            <person name="Smith M."/>
            <person name="Standring L."/>
            <person name="Sycamore N."/>
            <person name="Tester J."/>
            <person name="Thorpe A."/>
            <person name="Torcasso W."/>
            <person name="Tracey A."/>
            <person name="Tromans A."/>
            <person name="Tsolas J."/>
            <person name="Wall M."/>
            <person name="Walsh J."/>
            <person name="Wang H."/>
            <person name="Weinstock K."/>
            <person name="West A.P."/>
            <person name="Willey D.L."/>
            <person name="Whitehead S.L."/>
            <person name="Wilming L."/>
            <person name="Wray P.W."/>
            <person name="Young L."/>
            <person name="Chen Y."/>
            <person name="Lovering R.C."/>
            <person name="Moschonas N.K."/>
            <person name="Siebert R."/>
            <person name="Fechtel K."/>
            <person name="Bentley D."/>
            <person name="Durbin R.M."/>
            <person name="Hubbard T."/>
            <person name="Doucette-Stamm L."/>
            <person name="Beck S."/>
            <person name="Smith D.R."/>
            <person name="Rogers J."/>
        </authorList>
    </citation>
    <scope>NUCLEOTIDE SEQUENCE [LARGE SCALE GENOMIC DNA]</scope>
</reference>
<reference key="3">
    <citation type="submission" date="2005-09" db="EMBL/GenBank/DDBJ databases">
        <authorList>
            <person name="Mural R.J."/>
            <person name="Istrail S."/>
            <person name="Sutton G.G."/>
            <person name="Florea L."/>
            <person name="Halpern A.L."/>
            <person name="Mobarry C.M."/>
            <person name="Lippert R."/>
            <person name="Walenz B."/>
            <person name="Shatkay H."/>
            <person name="Dew I."/>
            <person name="Miller J.R."/>
            <person name="Flanigan M.J."/>
            <person name="Edwards N.J."/>
            <person name="Bolanos R."/>
            <person name="Fasulo D."/>
            <person name="Halldorsson B.V."/>
            <person name="Hannenhalli S."/>
            <person name="Turner R."/>
            <person name="Yooseph S."/>
            <person name="Lu F."/>
            <person name="Nusskern D.R."/>
            <person name="Shue B.C."/>
            <person name="Zheng X.H."/>
            <person name="Zhong F."/>
            <person name="Delcher A.L."/>
            <person name="Huson D.H."/>
            <person name="Kravitz S.A."/>
            <person name="Mouchard L."/>
            <person name="Reinert K."/>
            <person name="Remington K.A."/>
            <person name="Clark A.G."/>
            <person name="Waterman M.S."/>
            <person name="Eichler E.E."/>
            <person name="Adams M.D."/>
            <person name="Hunkapiller M.W."/>
            <person name="Myers E.W."/>
            <person name="Venter J.C."/>
        </authorList>
    </citation>
    <scope>NUCLEOTIDE SEQUENCE [LARGE SCALE GENOMIC DNA]</scope>
</reference>
<reference key="4">
    <citation type="journal article" date="2004" name="Genome Res.">
        <title>The status, quality, and expansion of the NIH full-length cDNA project: the Mammalian Gene Collection (MGC).</title>
        <authorList>
            <consortium name="The MGC Project Team"/>
        </authorList>
    </citation>
    <scope>NUCLEOTIDE SEQUENCE [LARGE SCALE MRNA] (ISOFORM 2)</scope>
    <scope>NUCLEOTIDE SEQUENCE [LARGE SCALE MRNA] OF 1-1176 (ISOFORM 1)</scope>
    <source>
        <tissue>Testis</tissue>
    </source>
</reference>
<reference key="5">
    <citation type="journal article" date="2001" name="Nat. Genet.">
        <title>An abundance of X-linked genes expressed in spermatogonia.</title>
        <authorList>
            <person name="Wang P.J."/>
            <person name="McCarrey J.R."/>
            <person name="Yang F."/>
            <person name="Page D.C."/>
        </authorList>
    </citation>
    <scope>NUCLEOTIDE SEQUENCE [MRNA] OF 308-1180 (ISOFORM 1)</scope>
    <source>
        <tissue>Testis</tissue>
    </source>
</reference>
<reference key="6">
    <citation type="journal article" date="2003" name="Int. J. Cancer">
        <title>Five new human cancer-germline genes identified among 12 genes expressed in spermatogonia.</title>
        <authorList>
            <person name="Loriot A."/>
            <person name="Boon T."/>
            <person name="De Smet C."/>
        </authorList>
    </citation>
    <scope>TISSUE SPECIFICITY</scope>
    <scope>IDENTIFICATION AS A CANCER/TESTIS ANTIGEN</scope>
</reference>
<keyword id="KW-0002">3D-structure</keyword>
<keyword id="KW-0025">Alternative splicing</keyword>
<keyword id="KW-0963">Cytoplasm</keyword>
<keyword id="KW-0217">Developmental protein</keyword>
<keyword id="KW-0221">Differentiation</keyword>
<keyword id="KW-0469">Meiosis</keyword>
<keyword id="KW-0479">Metal-binding</keyword>
<keyword id="KW-1267">Proteomics identification</keyword>
<keyword id="KW-1185">Reference proteome</keyword>
<keyword id="KW-0677">Repeat</keyword>
<keyword id="KW-0943">RNA-mediated gene silencing</keyword>
<keyword id="KW-0744">Spermatogenesis</keyword>
<keyword id="KW-0862">Zinc</keyword>
<keyword id="KW-0863">Zinc-finger</keyword>
<gene>
    <name type="primary">TDRD1</name>
</gene>
<accession>Q9BXT4</accession>
<accession>A6NEN3</accession>
<accession>A6NMN2</accession>
<accession>B3KVI4</accession>
<accession>B4E2L5</accession>
<accession>D3DRC2</accession>
<accession>Q4G0Y8</accession>
<accession>Q6P518</accession>
<accession>Q9H7B3</accession>
<sequence>MSVKSPFNVMSRNNLEAPPCKMTEPFNFEKNENKLPPHESLRSPGTLPNHPNFRLKSSENGNKKNNFLLCEQTKQYLASQEDNSVSSNPNGINGEVVGSKGDRKKLPAGNSVSPPSAESNSPPKEVNIKPGNNVRPAKSKKLNKLVENSLSISNPGLFTSLGPPLRSTTCHRCGLFGSLRCSQCKQTYYCSTACQRRDWSAHSIVCRPVQPNFHKLENKSSIETKDVEVNNKSDCPLGVTKEIAIWAERIMFSDLRSLQLKKTMEIKGTVTEFKHPGDFYVQLYSSEVLEYMNQLSASLKETYANVHEKDYIPVKGEVCIAKYTVDQTWNRAIIQNVDVQQKKAHVLYIDYGNEEIIPLNRIYHLNRNIDLFPPCAIKCFVANVIPAEGNWSSDCIKATKPLLMEQYCSIKIVDILEEEVVTFAVEVELPNSGKLLDHVLIEMGYGLKPSGQDSKKENADQSDPEDVGKMTTENNIVVDKSDLIPKVLTLNVGDEFCGVVAHIQTPEDFFCQQLQSGRKLAELQASLSKYCDQLPPRSDFYPAIGDICCAQFSEDDQWYRASVLAYASEESVLVGYVDYGNFEILSLMRLCPIIPKLLELPMQAIKCVLAGVKPSLGIWTPEAICLMKKLVQNKIITVKVVDKLENSSLVELIDKSETPHVSVSKVLLDAGFAVGEQSMVTDKPSDVKETSVPLGVEGKVNPLEWTWVELGVDQTVDVVVCVIYSPGEFYCHVLKEDALKKLNDLNKSLAEHCQQKLPNGFKAEIGQPCCAFFAGDGSWYRALVKEILPNGHVKVHFVDYGNIEEVTADELRMISSTFLNLPFQGIRCQLADIQSRNKHWSEEAITRFQMCVAGIKLQARVVEVTENGIGVELTDLSTCYPRIISDVLIDEHLVLKSASPHKDLPNDRLVNKHELQVHVQGLQATSSAEQWKTIELPVDKTIQANVLEIISPNLFYALPKGMPENQEKLCMLTAELLEYCNAPKSRPPYRPRIGDACCAKYTSDDFWYRAVVLGTSDTDVEVLYADYGNIETLPLCRVQPITSSHLALPFQIIRCSLEGLMELNGSSSQLIIMLLKNFMLNQNVMLSVKGITKNVHTVSVEKCSENGTVDVADKLVTFGLAKNITPQRQSALNTEKMYRMNCCCTELQKQVEKHEHILLFLLNNSTNQNKFIEMKKLLKS</sequence>
<comment type="function">
    <text evidence="1">Plays a central role during spermatogenesis by participating in the repression transposable elements and preventing their mobilization, which is essential for the germline integrity. Acts via the piRNA metabolic process, which mediates the repression of transposable elements during meiosis by forming complexes composed of piRNAs and Piwi proteins and governs the methylation and subsequent repression of transposons. Required for the localization of Piwi proteins to the meiotic nuage. Involved in the piRNA metabolic process by ensuring the entry of correct transcripts into the normal piRNA pool and limiting the entry of cellular transcripts into the piRNA pathway. May act by allowing the recruitment of piRNA biogenesis or loading factors that ensure the correct entry of transcripts and piRNAs into Piwi proteins (By similarity).</text>
</comment>
<comment type="subunit">
    <text evidence="1">Found in a mRNP complex, at least composed of TDRD1, TDRD6, TDRD7 and DDX4. Interacts with MAEL. Interacts with PIWIL1, PIWIL2 and PIWIL4 (when methylated on arginine residues). Interacts with TDRD12 (By similarity).</text>
</comment>
<comment type="interaction">
    <interactant intactId="EBI-10301451">
        <id>Q9BXT4-2</id>
    </interactant>
    <interactant intactId="EBI-717422">
        <id>Q12800</id>
        <label>TFCP2</label>
    </interactant>
    <organismsDiffer>false</organismsDiffer>
    <experiments>3</experiments>
</comment>
<comment type="subcellular location">
    <subcellularLocation>
        <location evidence="1">Cytoplasm</location>
    </subcellularLocation>
    <text evidence="1">Component of the meiotic nuage, also named P granule, a germ-cell-specific organelle required to repress transposon activity during meiosis. Also present in chromatoid body (By similarity).</text>
</comment>
<comment type="alternative products">
    <event type="alternative splicing"/>
    <isoform>
        <id>Q9BXT4-1</id>
        <name>1</name>
        <sequence type="displayed"/>
    </isoform>
    <isoform>
        <id>Q9BXT4-2</id>
        <name>2</name>
        <sequence type="described" ref="VSP_035481 VSP_035482"/>
    </isoform>
    <isoform>
        <id>Q9BXT4-3</id>
        <name>3</name>
        <sequence type="described" ref="VSP_036670"/>
    </isoform>
    <isoform>
        <id>Q9BXT4-4</id>
        <name>4</name>
        <sequence type="described" ref="VSP_036667 VSP_036668 VSP_035481 VSP_036669"/>
    </isoform>
</comment>
<comment type="tissue specificity">
    <text evidence="5">Testis and ovary specific. Also expressed in several cancers.</text>
</comment>
<comment type="domain">
    <text evidence="1">Tudor domains 2 and 3 have higher affinity for arginine-methylated peptides, tudor domain 1 is a poor binder due to an impaired aromatic cage.</text>
</comment>
<comment type="similarity">
    <text evidence="8">Belongs to the TDRD1 family.</text>
</comment>
<comment type="sequence caution" evidence="8">
    <conflict type="miscellaneous discrepancy">
        <sequence resource="EMBL-CDS" id="AAH35010"/>
    </conflict>
    <text>Potential poly-A sequence.</text>
</comment>
<comment type="sequence caution" evidence="8">
    <conflict type="erroneous initiation">
        <sequence resource="EMBL-CDS" id="AAK31985"/>
    </conflict>
    <text>Truncated N-terminus.</text>
</comment>
<comment type="sequence caution" evidence="8">
    <conflict type="miscellaneous discrepancy">
        <sequence resource="EMBL-CDS" id="AAK31985"/>
    </conflict>
    <text>Contaminating sequence.</text>
</comment>
<comment type="sequence caution" evidence="8">
    <conflict type="erroneous initiation">
        <sequence resource="EMBL-CDS" id="BAB14982"/>
    </conflict>
    <text>Truncated N-terminus.</text>
</comment>
<comment type="sequence caution" evidence="8">
    <conflict type="miscellaneous discrepancy">
        <sequence resource="EMBL-CDS" id="BAB14982"/>
    </conflict>
    <text>Potential poly-A sequence.</text>
</comment>
<evidence type="ECO:0000250" key="1"/>
<evidence type="ECO:0000255" key="2">
    <source>
        <dbReference type="PROSITE-ProRule" id="PRU00134"/>
    </source>
</evidence>
<evidence type="ECO:0000255" key="3">
    <source>
        <dbReference type="PROSITE-ProRule" id="PRU00211"/>
    </source>
</evidence>
<evidence type="ECO:0000256" key="4">
    <source>
        <dbReference type="SAM" id="MobiDB-lite"/>
    </source>
</evidence>
<evidence type="ECO:0000269" key="5">
    <source>
    </source>
</evidence>
<evidence type="ECO:0000303" key="6">
    <source>
    </source>
</evidence>
<evidence type="ECO:0000303" key="7">
    <source>
    </source>
</evidence>
<evidence type="ECO:0000305" key="8"/>
<evidence type="ECO:0007829" key="9">
    <source>
        <dbReference type="PDB" id="5M9N"/>
    </source>
</evidence>
<organism>
    <name type="scientific">Homo sapiens</name>
    <name type="common">Human</name>
    <dbReference type="NCBI Taxonomy" id="9606"/>
    <lineage>
        <taxon>Eukaryota</taxon>
        <taxon>Metazoa</taxon>
        <taxon>Chordata</taxon>
        <taxon>Craniata</taxon>
        <taxon>Vertebrata</taxon>
        <taxon>Euteleostomi</taxon>
        <taxon>Mammalia</taxon>
        <taxon>Eutheria</taxon>
        <taxon>Euarchontoglires</taxon>
        <taxon>Primates</taxon>
        <taxon>Haplorrhini</taxon>
        <taxon>Catarrhini</taxon>
        <taxon>Hominidae</taxon>
        <taxon>Homo</taxon>
    </lineage>
</organism>
<feature type="chain" id="PRO_0000183161" description="Tudor domain-containing protein 1">
    <location>
        <begin position="1"/>
        <end position="1180"/>
    </location>
</feature>
<feature type="domain" description="Tudor 1" evidence="3">
    <location>
        <begin position="312"/>
        <end position="372"/>
    </location>
</feature>
<feature type="domain" description="Tudor 2" evidence="3">
    <location>
        <begin position="541"/>
        <end position="600"/>
    </location>
</feature>
<feature type="domain" description="Tudor 3" evidence="3">
    <location>
        <begin position="762"/>
        <end position="821"/>
    </location>
</feature>
<feature type="domain" description="Tudor 4" evidence="3">
    <location>
        <begin position="990"/>
        <end position="1048"/>
    </location>
</feature>
<feature type="zinc finger region" description="MYND-type" evidence="2">
    <location>
        <begin position="170"/>
        <end position="206"/>
    </location>
</feature>
<feature type="region of interest" description="Disordered" evidence="4">
    <location>
        <begin position="1"/>
        <end position="66"/>
    </location>
</feature>
<feature type="region of interest" description="Disordered" evidence="4">
    <location>
        <begin position="79"/>
        <end position="138"/>
    </location>
</feature>
<feature type="region of interest" description="Disordered" evidence="4">
    <location>
        <begin position="450"/>
        <end position="469"/>
    </location>
</feature>
<feature type="compositionally biased region" description="Basic and acidic residues" evidence="4">
    <location>
        <begin position="27"/>
        <end position="41"/>
    </location>
</feature>
<feature type="compositionally biased region" description="Polar residues" evidence="4">
    <location>
        <begin position="79"/>
        <end position="91"/>
    </location>
</feature>
<feature type="compositionally biased region" description="Polar residues" evidence="4">
    <location>
        <begin position="110"/>
        <end position="122"/>
    </location>
</feature>
<feature type="binding site" evidence="2">
    <location>
        <position position="170"/>
    </location>
    <ligand>
        <name>Zn(2+)</name>
        <dbReference type="ChEBI" id="CHEBI:29105"/>
        <label>1</label>
    </ligand>
</feature>
<feature type="binding site" evidence="2">
    <location>
        <position position="173"/>
    </location>
    <ligand>
        <name>Zn(2+)</name>
        <dbReference type="ChEBI" id="CHEBI:29105"/>
        <label>1</label>
    </ligand>
</feature>
<feature type="binding site" evidence="2">
    <location>
        <position position="181"/>
    </location>
    <ligand>
        <name>Zn(2+)</name>
        <dbReference type="ChEBI" id="CHEBI:29105"/>
        <label>2</label>
    </ligand>
</feature>
<feature type="binding site" evidence="2">
    <location>
        <position position="184"/>
    </location>
    <ligand>
        <name>Zn(2+)</name>
        <dbReference type="ChEBI" id="CHEBI:29105"/>
        <label>2</label>
    </ligand>
</feature>
<feature type="binding site" evidence="2">
    <location>
        <position position="190"/>
    </location>
    <ligand>
        <name>Zn(2+)</name>
        <dbReference type="ChEBI" id="CHEBI:29105"/>
        <label>1</label>
    </ligand>
</feature>
<feature type="binding site" evidence="2">
    <location>
        <position position="194"/>
    </location>
    <ligand>
        <name>Zn(2+)</name>
        <dbReference type="ChEBI" id="CHEBI:29105"/>
        <label>1</label>
    </ligand>
</feature>
<feature type="binding site" evidence="2">
    <location>
        <position position="202"/>
    </location>
    <ligand>
        <name>Zn(2+)</name>
        <dbReference type="ChEBI" id="CHEBI:29105"/>
        <label>2</label>
    </ligand>
</feature>
<feature type="binding site" evidence="2">
    <location>
        <position position="206"/>
    </location>
    <ligand>
        <name>Zn(2+)</name>
        <dbReference type="ChEBI" id="CHEBI:29105"/>
        <label>2</label>
    </ligand>
</feature>
<feature type="splice variant" id="VSP_036667" description="In isoform 4." evidence="6">
    <location>
        <begin position="1"/>
        <end position="291"/>
    </location>
</feature>
<feature type="splice variant" id="VSP_036668" description="In isoform 4." evidence="6">
    <location>
        <begin position="328"/>
        <end position="375"/>
    </location>
</feature>
<feature type="splice variant" id="VSP_035481" description="In isoform 2 and isoform 4." evidence="6 7">
    <location>
        <begin position="554"/>
        <end position="610"/>
    </location>
</feature>
<feature type="splice variant" id="VSP_035482" description="In isoform 2." evidence="7">
    <location>
        <begin position="775"/>
        <end position="831"/>
    </location>
</feature>
<feature type="splice variant" id="VSP_036669" description="In isoform 4." evidence="6">
    <location>
        <begin position="1059"/>
        <end position="1134"/>
    </location>
</feature>
<feature type="splice variant" id="VSP_036670" description="In isoform 3." evidence="6">
    <original>S</original>
    <variation>KTASLGGKPL</variation>
    <location>
        <position position="1180"/>
    </location>
</feature>
<feature type="sequence variant" id="VAR_057321" description="In dbSNP:rs7914059.">
    <original>V</original>
    <variation>L</variation>
    <location>
        <position position="864"/>
    </location>
</feature>
<feature type="sequence variant" id="VAR_057322" description="In dbSNP:rs34112549.">
    <original>Y</original>
    <variation>C</variation>
    <location>
        <position position="1138"/>
    </location>
</feature>
<feature type="sequence conflict" description="In Ref. 1; BAG53796." evidence="8" ref="1">
    <original>M</original>
    <variation>T</variation>
    <location>
        <position position="251"/>
    </location>
</feature>
<feature type="sequence conflict" description="In Ref. 5; AAK31985." evidence="8" ref="5">
    <original>M</original>
    <variation>T</variation>
    <location>
        <position position="1140"/>
    </location>
</feature>
<feature type="sequence conflict" description="In Ref. 5; AAK31985." evidence="8" ref="5">
    <original>L</original>
    <variation>V</variation>
    <location>
        <position position="1178"/>
    </location>
</feature>
<feature type="helix" evidence="9">
    <location>
        <begin position="480"/>
        <end position="482"/>
    </location>
</feature>
<feature type="strand" evidence="9">
    <location>
        <begin position="495"/>
        <end position="505"/>
    </location>
</feature>
<feature type="strand" evidence="9">
    <location>
        <begin position="508"/>
        <end position="513"/>
    </location>
</feature>
<feature type="helix" evidence="9">
    <location>
        <begin position="514"/>
        <end position="516"/>
    </location>
</feature>
<feature type="helix" evidence="9">
    <location>
        <begin position="517"/>
        <end position="532"/>
    </location>
</feature>
<feature type="strand" evidence="9">
    <location>
        <begin position="547"/>
        <end position="551"/>
    </location>
</feature>
<feature type="turn" evidence="9">
    <location>
        <begin position="553"/>
        <end position="555"/>
    </location>
</feature>
<feature type="strand" evidence="9">
    <location>
        <begin position="558"/>
        <end position="568"/>
    </location>
</feature>
<feature type="strand" evidence="9">
    <location>
        <begin position="571"/>
        <end position="576"/>
    </location>
</feature>
<feature type="turn" evidence="9">
    <location>
        <begin position="577"/>
        <end position="579"/>
    </location>
</feature>
<feature type="strand" evidence="9">
    <location>
        <begin position="582"/>
        <end position="586"/>
    </location>
</feature>
<feature type="helix" evidence="9">
    <location>
        <begin position="587"/>
        <end position="589"/>
    </location>
</feature>
<feature type="helix" evidence="9">
    <location>
        <begin position="595"/>
        <end position="598"/>
    </location>
</feature>
<feature type="strand" evidence="9">
    <location>
        <begin position="605"/>
        <end position="609"/>
    </location>
</feature>
<feature type="strand" evidence="9">
    <location>
        <begin position="612"/>
        <end position="614"/>
    </location>
</feature>
<feature type="helix" evidence="9">
    <location>
        <begin position="621"/>
        <end position="631"/>
    </location>
</feature>
<feature type="strand" evidence="9">
    <location>
        <begin position="636"/>
        <end position="643"/>
    </location>
</feature>
<feature type="strand" evidence="9">
    <location>
        <begin position="645"/>
        <end position="654"/>
    </location>
</feature>
<feature type="strand" evidence="9">
    <location>
        <begin position="657"/>
        <end position="659"/>
    </location>
</feature>
<feature type="helix" evidence="9">
    <location>
        <begin position="663"/>
        <end position="669"/>
    </location>
</feature>
<feature type="strand" evidence="9">
    <location>
        <begin position="671"/>
        <end position="675"/>
    </location>
</feature>
<protein>
    <recommendedName>
        <fullName>Tudor domain-containing protein 1</fullName>
    </recommendedName>
    <alternativeName>
        <fullName>Cancer/testis antigen 41.1</fullName>
        <shortName>CT41.1</shortName>
    </alternativeName>
</protein>
<dbReference type="EMBL" id="AC022023">
    <property type="status" value="NOT_ANNOTATED_CDS"/>
    <property type="molecule type" value="Genomic_DNA"/>
</dbReference>
<dbReference type="EMBL" id="AK122916">
    <property type="protein sequence ID" value="BAG53796.1"/>
    <property type="molecule type" value="mRNA"/>
</dbReference>
<dbReference type="EMBL" id="AK304331">
    <property type="protein sequence ID" value="BAG65177.1"/>
    <property type="molecule type" value="mRNA"/>
</dbReference>
<dbReference type="EMBL" id="CH471066">
    <property type="protein sequence ID" value="EAW49479.1"/>
    <property type="molecule type" value="Genomic_DNA"/>
</dbReference>
<dbReference type="EMBL" id="CH471066">
    <property type="protein sequence ID" value="EAW49480.1"/>
    <property type="molecule type" value="Genomic_DNA"/>
</dbReference>
<dbReference type="EMBL" id="BC035010">
    <property type="protein sequence ID" value="AAH35010.1"/>
    <property type="status" value="ALT_SEQ"/>
    <property type="molecule type" value="mRNA"/>
</dbReference>
<dbReference type="EMBL" id="BC063133">
    <property type="protein sequence ID" value="AAH63133.1"/>
    <property type="molecule type" value="mRNA"/>
</dbReference>
<dbReference type="EMBL" id="AF285606">
    <property type="protein sequence ID" value="AAK31985.1"/>
    <property type="status" value="ALT_SEQ"/>
    <property type="molecule type" value="mRNA"/>
</dbReference>
<dbReference type="EMBL" id="AK024735">
    <property type="protein sequence ID" value="BAB14982.1"/>
    <property type="status" value="ALT_SEQ"/>
    <property type="molecule type" value="mRNA"/>
</dbReference>
<dbReference type="CCDS" id="CCDS7588.1">
    <molecule id="Q9BXT4-3"/>
</dbReference>
<dbReference type="CCDS" id="CCDS91352.1">
    <molecule id="Q9BXT4-1"/>
</dbReference>
<dbReference type="RefSeq" id="NP_001372292.1">
    <molecule id="Q9BXT4-3"/>
    <property type="nucleotide sequence ID" value="NM_001385363.1"/>
</dbReference>
<dbReference type="RefSeq" id="NP_001372293.1">
    <molecule id="Q9BXT4-1"/>
    <property type="nucleotide sequence ID" value="NM_001385364.2"/>
</dbReference>
<dbReference type="RefSeq" id="NP_001372299.1">
    <molecule id="Q9BXT4-2"/>
    <property type="nucleotide sequence ID" value="NM_001385370.1"/>
</dbReference>
<dbReference type="RefSeq" id="NP_001382134.1">
    <molecule id="Q9BXT4-1"/>
    <property type="nucleotide sequence ID" value="NM_001395205.1"/>
</dbReference>
<dbReference type="RefSeq" id="NP_942090.1">
    <molecule id="Q9BXT4-3"/>
    <property type="nucleotide sequence ID" value="NM_198795.2"/>
</dbReference>
<dbReference type="RefSeq" id="XP_005270035.1">
    <property type="nucleotide sequence ID" value="XM_005269978.2"/>
</dbReference>
<dbReference type="RefSeq" id="XP_011538261.1">
    <molecule id="Q9BXT4-3"/>
    <property type="nucleotide sequence ID" value="XM_011539959.3"/>
</dbReference>
<dbReference type="RefSeq" id="XP_011538262.1">
    <molecule id="Q9BXT4-3"/>
    <property type="nucleotide sequence ID" value="XM_011539960.3"/>
</dbReference>
<dbReference type="RefSeq" id="XP_011538263.1">
    <molecule id="Q9BXT4-3"/>
    <property type="nucleotide sequence ID" value="XM_011539961.3"/>
</dbReference>
<dbReference type="RefSeq" id="XP_011538264.1">
    <molecule id="Q9BXT4-3"/>
    <property type="nucleotide sequence ID" value="XM_011539962.2"/>
</dbReference>
<dbReference type="RefSeq" id="XP_011538265.1">
    <property type="nucleotide sequence ID" value="XM_011539963.1"/>
</dbReference>
<dbReference type="RefSeq" id="XP_054222280.1">
    <molecule id="Q9BXT4-3"/>
    <property type="nucleotide sequence ID" value="XM_054366305.1"/>
</dbReference>
<dbReference type="RefSeq" id="XP_054222281.1">
    <molecule id="Q9BXT4-3"/>
    <property type="nucleotide sequence ID" value="XM_054366306.1"/>
</dbReference>
<dbReference type="RefSeq" id="XP_054222282.1">
    <molecule id="Q9BXT4-3"/>
    <property type="nucleotide sequence ID" value="XM_054366307.1"/>
</dbReference>
<dbReference type="RefSeq" id="XP_054222283.1">
    <molecule id="Q9BXT4-3"/>
    <property type="nucleotide sequence ID" value="XM_054366308.1"/>
</dbReference>
<dbReference type="PDB" id="5M9N">
    <property type="method" value="X-ray"/>
    <property type="resolution" value="1.95 A"/>
    <property type="chains" value="A/B=460-679"/>
</dbReference>
<dbReference type="PDBsum" id="5M9N"/>
<dbReference type="SMR" id="Q9BXT4"/>
<dbReference type="BioGRID" id="121098">
    <property type="interactions" value="8"/>
</dbReference>
<dbReference type="FunCoup" id="Q9BXT4">
    <property type="interactions" value="46"/>
</dbReference>
<dbReference type="IntAct" id="Q9BXT4">
    <property type="interactions" value="4"/>
</dbReference>
<dbReference type="MINT" id="Q9BXT4"/>
<dbReference type="STRING" id="9606.ENSP00000251864"/>
<dbReference type="GlyGen" id="Q9BXT4">
    <property type="glycosylation" value="1 site, 1 O-linked glycan (1 site)"/>
</dbReference>
<dbReference type="iPTMnet" id="Q9BXT4"/>
<dbReference type="PhosphoSitePlus" id="Q9BXT4"/>
<dbReference type="BioMuta" id="TDRD1"/>
<dbReference type="DMDM" id="206729901"/>
<dbReference type="jPOST" id="Q9BXT4"/>
<dbReference type="MassIVE" id="Q9BXT4"/>
<dbReference type="PaxDb" id="9606-ENSP00000251864"/>
<dbReference type="PeptideAtlas" id="Q9BXT4"/>
<dbReference type="ProteomicsDB" id="79503">
    <molecule id="Q9BXT4-1"/>
</dbReference>
<dbReference type="ProteomicsDB" id="79504">
    <molecule id="Q9BXT4-2"/>
</dbReference>
<dbReference type="ProteomicsDB" id="79505">
    <molecule id="Q9BXT4-3"/>
</dbReference>
<dbReference type="ProteomicsDB" id="79506">
    <molecule id="Q9BXT4-4"/>
</dbReference>
<dbReference type="Antibodypedia" id="31923">
    <property type="antibodies" value="138 antibodies from 24 providers"/>
</dbReference>
<dbReference type="DNASU" id="56165"/>
<dbReference type="Ensembl" id="ENST00000251864.7">
    <molecule id="Q9BXT4-3"/>
    <property type="protein sequence ID" value="ENSP00000251864.2"/>
    <property type="gene ID" value="ENSG00000095627.10"/>
</dbReference>
<dbReference type="Ensembl" id="ENST00000695399.1">
    <molecule id="Q9BXT4-1"/>
    <property type="protein sequence ID" value="ENSP00000511878.1"/>
    <property type="gene ID" value="ENSG00000095627.10"/>
</dbReference>
<dbReference type="GeneID" id="56165"/>
<dbReference type="KEGG" id="hsa:56165"/>
<dbReference type="MANE-Select" id="ENST00000695399.1">
    <property type="protein sequence ID" value="ENSP00000511878.1"/>
    <property type="RefSeq nucleotide sequence ID" value="NM_001395205.1"/>
    <property type="RefSeq protein sequence ID" value="NP_001382134.1"/>
</dbReference>
<dbReference type="UCSC" id="uc001lbg.1">
    <molecule id="Q9BXT4-1"/>
    <property type="organism name" value="human"/>
</dbReference>
<dbReference type="AGR" id="HGNC:11712"/>
<dbReference type="CTD" id="56165"/>
<dbReference type="DisGeNET" id="56165"/>
<dbReference type="GeneCards" id="TDRD1"/>
<dbReference type="HGNC" id="HGNC:11712">
    <property type="gene designation" value="TDRD1"/>
</dbReference>
<dbReference type="HPA" id="ENSG00000095627">
    <property type="expression patterns" value="Tissue enriched (testis)"/>
</dbReference>
<dbReference type="MIM" id="605796">
    <property type="type" value="gene"/>
</dbReference>
<dbReference type="neXtProt" id="NX_Q9BXT4"/>
<dbReference type="OpenTargets" id="ENSG00000095627"/>
<dbReference type="PharmGKB" id="PA36430"/>
<dbReference type="VEuPathDB" id="HostDB:ENSG00000095627"/>
<dbReference type="eggNOG" id="KOG2039">
    <property type="taxonomic scope" value="Eukaryota"/>
</dbReference>
<dbReference type="GeneTree" id="ENSGT00940000158754"/>
<dbReference type="InParanoid" id="Q9BXT4"/>
<dbReference type="OMA" id="YCSAQKS"/>
<dbReference type="OrthoDB" id="341421at2759"/>
<dbReference type="PAN-GO" id="Q9BXT4">
    <property type="GO annotations" value="3 GO annotations based on evolutionary models"/>
</dbReference>
<dbReference type="PhylomeDB" id="Q9BXT4"/>
<dbReference type="TreeFam" id="TF343710"/>
<dbReference type="PathwayCommons" id="Q9BXT4"/>
<dbReference type="Reactome" id="R-HSA-5601884">
    <property type="pathway name" value="PIWI-interacting RNA (piRNA) biogenesis"/>
</dbReference>
<dbReference type="SignaLink" id="Q9BXT4"/>
<dbReference type="SIGNOR" id="Q9BXT4"/>
<dbReference type="BioGRID-ORCS" id="56165">
    <property type="hits" value="10 hits in 1115 CRISPR screens"/>
</dbReference>
<dbReference type="CD-CODE" id="6F24707C">
    <property type="entry name" value="Cajal body"/>
</dbReference>
<dbReference type="ChiTaRS" id="TDRD1">
    <property type="organism name" value="human"/>
</dbReference>
<dbReference type="GenomeRNAi" id="56165"/>
<dbReference type="Pharos" id="Q9BXT4">
    <property type="development level" value="Tbio"/>
</dbReference>
<dbReference type="PRO" id="PR:Q9BXT4"/>
<dbReference type="Proteomes" id="UP000005640">
    <property type="component" value="Chromosome 10"/>
</dbReference>
<dbReference type="RNAct" id="Q9BXT4">
    <property type="molecule type" value="protein"/>
</dbReference>
<dbReference type="Bgee" id="ENSG00000095627">
    <property type="expression patterns" value="Expressed in secondary oocyte and 77 other cell types or tissues"/>
</dbReference>
<dbReference type="ExpressionAtlas" id="Q9BXT4">
    <property type="expression patterns" value="baseline and differential"/>
</dbReference>
<dbReference type="GO" id="GO:0033391">
    <property type="term" value="C:chromatoid body"/>
    <property type="evidence" value="ECO:0007669"/>
    <property type="project" value="Ensembl"/>
</dbReference>
<dbReference type="GO" id="GO:0005737">
    <property type="term" value="C:cytoplasm"/>
    <property type="evidence" value="ECO:0000250"/>
    <property type="project" value="UniProtKB"/>
</dbReference>
<dbReference type="GO" id="GO:0043186">
    <property type="term" value="C:P granule"/>
    <property type="evidence" value="ECO:0000250"/>
    <property type="project" value="UniProtKB"/>
</dbReference>
<dbReference type="GO" id="GO:0071546">
    <property type="term" value="C:pi-body"/>
    <property type="evidence" value="ECO:0000250"/>
    <property type="project" value="UniProtKB"/>
</dbReference>
<dbReference type="GO" id="GO:1990904">
    <property type="term" value="C:ribonucleoprotein complex"/>
    <property type="evidence" value="ECO:0007669"/>
    <property type="project" value="Ensembl"/>
</dbReference>
<dbReference type="GO" id="GO:0045202">
    <property type="term" value="C:synapse"/>
    <property type="evidence" value="ECO:0007669"/>
    <property type="project" value="Ensembl"/>
</dbReference>
<dbReference type="GO" id="GO:0008270">
    <property type="term" value="F:zinc ion binding"/>
    <property type="evidence" value="ECO:0007669"/>
    <property type="project" value="UniProtKB-KW"/>
</dbReference>
<dbReference type="GO" id="GO:0007281">
    <property type="term" value="P:germ cell development"/>
    <property type="evidence" value="ECO:0000250"/>
    <property type="project" value="UniProtKB"/>
</dbReference>
<dbReference type="GO" id="GO:0051321">
    <property type="term" value="P:meiotic cell cycle"/>
    <property type="evidence" value="ECO:0007669"/>
    <property type="project" value="UniProtKB-KW"/>
</dbReference>
<dbReference type="GO" id="GO:0030719">
    <property type="term" value="P:P granule organization"/>
    <property type="evidence" value="ECO:0000318"/>
    <property type="project" value="GO_Central"/>
</dbReference>
<dbReference type="GO" id="GO:0034587">
    <property type="term" value="P:piRNA processing"/>
    <property type="evidence" value="ECO:0000250"/>
    <property type="project" value="UniProtKB"/>
</dbReference>
<dbReference type="GO" id="GO:0007283">
    <property type="term" value="P:spermatogenesis"/>
    <property type="evidence" value="ECO:0000250"/>
    <property type="project" value="UniProtKB"/>
</dbReference>
<dbReference type="GO" id="GO:0141196">
    <property type="term" value="P:transposable element silencing by piRNA-mediated DNA methylation"/>
    <property type="evidence" value="ECO:0000250"/>
    <property type="project" value="UniProtKB"/>
</dbReference>
<dbReference type="CDD" id="cd20408">
    <property type="entry name" value="Tudor_TDRD1_rpt1"/>
    <property type="match status" value="1"/>
</dbReference>
<dbReference type="CDD" id="cd20409">
    <property type="entry name" value="Tudor_TDRD1_rpt2"/>
    <property type="match status" value="1"/>
</dbReference>
<dbReference type="CDD" id="cd20410">
    <property type="entry name" value="Tudor_TDRD1_rpt3"/>
    <property type="match status" value="1"/>
</dbReference>
<dbReference type="CDD" id="cd20411">
    <property type="entry name" value="Tudor_TDRD1_rpt4"/>
    <property type="match status" value="1"/>
</dbReference>
<dbReference type="FunFam" id="2.30.30.140:FF:000048">
    <property type="entry name" value="Tudor domain containing 1"/>
    <property type="match status" value="2"/>
</dbReference>
<dbReference type="FunFam" id="2.40.50.90:FF:000027">
    <property type="entry name" value="Tudor domain containing 1"/>
    <property type="match status" value="1"/>
</dbReference>
<dbReference type="FunFam" id="6.10.140.2220:FF:000011">
    <property type="entry name" value="Tudor domain containing 1"/>
    <property type="match status" value="1"/>
</dbReference>
<dbReference type="FunFam" id="2.30.30.140:FF:000081">
    <property type="entry name" value="Tudor domain-containing protein 1"/>
    <property type="match status" value="1"/>
</dbReference>
<dbReference type="FunFam" id="2.30.30.140:FF:000091">
    <property type="entry name" value="Tudor domain-containing protein 1"/>
    <property type="match status" value="1"/>
</dbReference>
<dbReference type="Gene3D" id="2.30.30.140">
    <property type="match status" value="4"/>
</dbReference>
<dbReference type="Gene3D" id="2.40.50.90">
    <property type="match status" value="5"/>
</dbReference>
<dbReference type="Gene3D" id="6.10.140.2220">
    <property type="match status" value="1"/>
</dbReference>
<dbReference type="InterPro" id="IPR035437">
    <property type="entry name" value="SNase_OB-fold_sf"/>
</dbReference>
<dbReference type="InterPro" id="IPR002999">
    <property type="entry name" value="Tudor"/>
</dbReference>
<dbReference type="InterPro" id="IPR050621">
    <property type="entry name" value="Tudor_domain_containing"/>
</dbReference>
<dbReference type="InterPro" id="IPR047376">
    <property type="entry name" value="Tudor_TDRD1_rpt1"/>
</dbReference>
<dbReference type="InterPro" id="IPR047377">
    <property type="entry name" value="Tudor_TDRD1_rpt2"/>
</dbReference>
<dbReference type="InterPro" id="IPR047378">
    <property type="entry name" value="Tudor_TDRD1_rpt3"/>
</dbReference>
<dbReference type="InterPro" id="IPR002893">
    <property type="entry name" value="Znf_MYND"/>
</dbReference>
<dbReference type="PANTHER" id="PTHR22948:SF29">
    <property type="entry name" value="FI02030P-RELATED"/>
    <property type="match status" value="1"/>
</dbReference>
<dbReference type="PANTHER" id="PTHR22948">
    <property type="entry name" value="TUDOR DOMAIN CONTAINING PROTEIN"/>
    <property type="match status" value="1"/>
</dbReference>
<dbReference type="Pfam" id="PF00567">
    <property type="entry name" value="TUDOR"/>
    <property type="match status" value="4"/>
</dbReference>
<dbReference type="Pfam" id="PF01753">
    <property type="entry name" value="zf-MYND"/>
    <property type="match status" value="1"/>
</dbReference>
<dbReference type="SMART" id="SM00333">
    <property type="entry name" value="TUDOR"/>
    <property type="match status" value="4"/>
</dbReference>
<dbReference type="SUPFAM" id="SSF144232">
    <property type="entry name" value="HIT/MYND zinc finger-like"/>
    <property type="match status" value="1"/>
</dbReference>
<dbReference type="SUPFAM" id="SSF63748">
    <property type="entry name" value="Tudor/PWWP/MBT"/>
    <property type="match status" value="4"/>
</dbReference>
<dbReference type="PROSITE" id="PS50304">
    <property type="entry name" value="TUDOR"/>
    <property type="match status" value="4"/>
</dbReference>
<dbReference type="PROSITE" id="PS01360">
    <property type="entry name" value="ZF_MYND_1"/>
    <property type="match status" value="1"/>
</dbReference>
<dbReference type="PROSITE" id="PS50865">
    <property type="entry name" value="ZF_MYND_2"/>
    <property type="match status" value="1"/>
</dbReference>